<organism>
    <name type="scientific">Mus musculus</name>
    <name type="common">Mouse</name>
    <dbReference type="NCBI Taxonomy" id="10090"/>
    <lineage>
        <taxon>Eukaryota</taxon>
        <taxon>Metazoa</taxon>
        <taxon>Chordata</taxon>
        <taxon>Craniata</taxon>
        <taxon>Vertebrata</taxon>
        <taxon>Euteleostomi</taxon>
        <taxon>Mammalia</taxon>
        <taxon>Eutheria</taxon>
        <taxon>Euarchontoglires</taxon>
        <taxon>Glires</taxon>
        <taxon>Rodentia</taxon>
        <taxon>Myomorpha</taxon>
        <taxon>Muroidea</taxon>
        <taxon>Muridae</taxon>
        <taxon>Murinae</taxon>
        <taxon>Mus</taxon>
        <taxon>Mus</taxon>
    </lineage>
</organism>
<comment type="function">
    <text evidence="5 6">Plays a role in the establishment of cell polarity and epithelial lumen formation (PubMed:20835237). Also plays an essential role in ciliogenesis and subsequent Hedgehog signaling pathway that requires the presence of intact primary cilia for pathway activation. Mechanistically, interacts with and mediates RABEP2 centrosomal localization which is critical for ciliogenesis (PubMed:27224062).</text>
</comment>
<comment type="subunit">
    <text evidence="1 4">Homodimer (PubMed:12559564). Interacts with OFD1; the interaction is direct (By similarity). Interacts with FAM161A (By similarity). Interacts with RABEP2, ERC1 and CEP131 (By similarity).</text>
</comment>
<comment type="subcellular location">
    <subcellularLocation>
        <location evidence="4 5">Cytoplasm</location>
        <location evidence="4 5">Cytoskeleton</location>
        <location evidence="4 5">Microtubule organizing center</location>
        <location evidence="4 5">Centrosome</location>
        <location evidence="4 5">Centriole</location>
    </subcellularLocation>
    <subcellularLocation>
        <location evidence="1">Cytoplasm</location>
        <location evidence="1">Cytoskeleton</location>
        <location evidence="1">Microtubule organizing center</location>
        <location evidence="1">Centrosome</location>
    </subcellularLocation>
    <subcellularLocation>
        <location evidence="1">Cytoplasm</location>
        <location evidence="1">Cytoskeleton</location>
        <location evidence="1">Cilium basal body</location>
    </subcellularLocation>
    <subcellularLocation>
        <location evidence="1">Cell junction</location>
    </subcellularLocation>
    <text evidence="1">Located at the distal ends of both centrioles and colocalizes to centrosomes throughout the cell cycle.</text>
</comment>
<comment type="tissue specificity">
    <text evidence="4 5">Expressed in liver, kidney, spleen, brain, heart and muscle. Expressed in photoreceptor cells of the retina.</text>
</comment>
<comment type="disruption phenotype">
    <text evidence="5 6">In renal epithelial cells gene knockdown results in the formation of spheroids with architectural defects characterized by disturbed localization of beta-catenin (CTNNB1) at the basolateral membrane, fewer tight junctions and an irregular lumen (PubMed:20835237). SDCCAG8-deficient mice display developmental bone malformations with rib cage abnormalities.</text>
</comment>
<keyword id="KW-0965">Cell junction</keyword>
<keyword id="KW-0966">Cell projection</keyword>
<keyword id="KW-0970">Cilium biogenesis/degradation</keyword>
<keyword id="KW-0175">Coiled coil</keyword>
<keyword id="KW-0963">Cytoplasm</keyword>
<keyword id="KW-0206">Cytoskeleton</keyword>
<keyword id="KW-0597">Phosphoprotein</keyword>
<keyword id="KW-1185">Reference proteome</keyword>
<name>SDCG8_MOUSE</name>
<protein>
    <recommendedName>
        <fullName>Serologically defined colon cancer antigen 8 homolog</fullName>
    </recommendedName>
    <alternativeName>
        <fullName>Centrosomal colon cancer autoantigen protein</fullName>
        <shortName>mCCCAP</shortName>
    </alternativeName>
</protein>
<sequence>MAKSPGNSTLEDSLGQYQRSLRERANRSIHQLKCALREVDVTVEEDALDPSTSINVENEDTGVAWHELQHSHAVNQLKALLRQQTNKENETSPPRRRKLSPSRPSECDDGSMPTMHNLVPIINDQSQYIHHLEAEVKFCKDELSGMKNRVQVVVLENERLQQELKSQRPEETLREQTFLDASGNMQNSWIMTREDSRVDEAAKRPFSHGDAETGKTASTGDANKWKLELERLKLTYEAKTDLLESQLMLLRKDLAEYQKTCEDLKERLKHKESLLAASASSRVGGLCLKCAQHEAVLSQTHSNVHIQTIERLTKERDDLMSVLVSVRSSLAEAQKRETSAYEQVKHAVQMTEEANFEKTKALIQCEQLKSELERQTERLEKELASQQEKRAVEKEMIKKEVAREREDAESKMLILSQNIAKLEAQVEKVTREKTAAVSHLEEIQNHVASQEMDVTKVCGEMRFQLNKTKMEKDEVEKEHREYKAKSHKDLEMKVQEIEKLRLELSESEQHVEQEQQKAARARQECLRVTELLGEAERQLHLTRLEKDSIQQSFSNEAKAQALQAQQREQELTQKIQQMETQHDKTESEQYLLLTSQNTFLTKLKEECCLLAKKLEKVSLKSRSQIVRLSQEKRYLCDKLEKLQKRNDELEEQCIQHGRVHETMKERLRQLDKHGQATAQQLVQLLNKQNQLLLERQNLSEEVARLRAQLPSMPQSDC</sequence>
<accession>Q80UF4</accession>
<dbReference type="EMBL" id="AF250729">
    <property type="protein sequence ID" value="AAO27828.1"/>
    <property type="molecule type" value="mRNA"/>
</dbReference>
<dbReference type="EMBL" id="AK132316">
    <property type="protein sequence ID" value="BAE21100.1"/>
    <property type="molecule type" value="mRNA"/>
</dbReference>
<dbReference type="EMBL" id="AK133622">
    <property type="protein sequence ID" value="BAE21753.1"/>
    <property type="molecule type" value="mRNA"/>
</dbReference>
<dbReference type="CCDS" id="CCDS35798.1"/>
<dbReference type="RefSeq" id="NP_084032.1">
    <property type="nucleotide sequence ID" value="NM_029756.3"/>
</dbReference>
<dbReference type="SMR" id="Q80UF4"/>
<dbReference type="BioGRID" id="218334">
    <property type="interactions" value="25"/>
</dbReference>
<dbReference type="FunCoup" id="Q80UF4">
    <property type="interactions" value="1842"/>
</dbReference>
<dbReference type="IntAct" id="Q80UF4">
    <property type="interactions" value="24"/>
</dbReference>
<dbReference type="STRING" id="10090.ENSMUSP00000027785"/>
<dbReference type="iPTMnet" id="Q80UF4"/>
<dbReference type="PhosphoSitePlus" id="Q80UF4"/>
<dbReference type="PaxDb" id="10090-ENSMUSP00000027785"/>
<dbReference type="ProteomicsDB" id="256940"/>
<dbReference type="Antibodypedia" id="34709">
    <property type="antibodies" value="246 antibodies from 32 providers"/>
</dbReference>
<dbReference type="Ensembl" id="ENSMUST00000027785.15">
    <property type="protein sequence ID" value="ENSMUSP00000027785.9"/>
    <property type="gene ID" value="ENSMUSG00000026504.18"/>
</dbReference>
<dbReference type="GeneID" id="76816"/>
<dbReference type="KEGG" id="mmu:76816"/>
<dbReference type="UCSC" id="uc007duj.2">
    <property type="organism name" value="mouse"/>
</dbReference>
<dbReference type="AGR" id="MGI:1924066"/>
<dbReference type="CTD" id="10806"/>
<dbReference type="MGI" id="MGI:1924066">
    <property type="gene designation" value="Sdccag8"/>
</dbReference>
<dbReference type="VEuPathDB" id="HostDB:ENSMUSG00000026504"/>
<dbReference type="eggNOG" id="ENOG502R5XE">
    <property type="taxonomic scope" value="Eukaryota"/>
</dbReference>
<dbReference type="GeneTree" id="ENSGT00730000111198"/>
<dbReference type="HOGENOM" id="CLU_024506_0_0_1"/>
<dbReference type="InParanoid" id="Q80UF4"/>
<dbReference type="OMA" id="SQEKMYT"/>
<dbReference type="PhylomeDB" id="Q80UF4"/>
<dbReference type="TreeFam" id="TF325472"/>
<dbReference type="Reactome" id="R-MMU-2565942">
    <property type="pathway name" value="Regulation of PLK1 Activity at G2/M Transition"/>
</dbReference>
<dbReference type="Reactome" id="R-MMU-380259">
    <property type="pathway name" value="Loss of Nlp from mitotic centrosomes"/>
</dbReference>
<dbReference type="Reactome" id="R-MMU-380270">
    <property type="pathway name" value="Recruitment of mitotic centrosome proteins and complexes"/>
</dbReference>
<dbReference type="Reactome" id="R-MMU-380284">
    <property type="pathway name" value="Loss of proteins required for interphase microtubule organization from the centrosome"/>
</dbReference>
<dbReference type="Reactome" id="R-MMU-380320">
    <property type="pathway name" value="Recruitment of NuMA to mitotic centrosomes"/>
</dbReference>
<dbReference type="Reactome" id="R-MMU-5620912">
    <property type="pathway name" value="Anchoring of the basal body to the plasma membrane"/>
</dbReference>
<dbReference type="Reactome" id="R-MMU-8854518">
    <property type="pathway name" value="AURKA Activation by TPX2"/>
</dbReference>
<dbReference type="BioGRID-ORCS" id="76816">
    <property type="hits" value="2 hits in 76 CRISPR screens"/>
</dbReference>
<dbReference type="CD-CODE" id="01CA17F3">
    <property type="entry name" value="Centrosome"/>
</dbReference>
<dbReference type="ChiTaRS" id="Sdccag8">
    <property type="organism name" value="mouse"/>
</dbReference>
<dbReference type="PRO" id="PR:Q80UF4"/>
<dbReference type="Proteomes" id="UP000000589">
    <property type="component" value="Chromosome 1"/>
</dbReference>
<dbReference type="RNAct" id="Q80UF4">
    <property type="molecule type" value="protein"/>
</dbReference>
<dbReference type="Bgee" id="ENSMUSG00000026504">
    <property type="expression patterns" value="Expressed in floor plate of midbrain and 226 other cell types or tissues"/>
</dbReference>
<dbReference type="ExpressionAtlas" id="Q80UF4">
    <property type="expression patterns" value="baseline and differential"/>
</dbReference>
<dbReference type="GO" id="GO:0005911">
    <property type="term" value="C:cell-cell junction"/>
    <property type="evidence" value="ECO:0007669"/>
    <property type="project" value="Ensembl"/>
</dbReference>
<dbReference type="GO" id="GO:0034451">
    <property type="term" value="C:centriolar satellite"/>
    <property type="evidence" value="ECO:0000314"/>
    <property type="project" value="MGI"/>
</dbReference>
<dbReference type="GO" id="GO:0005814">
    <property type="term" value="C:centriole"/>
    <property type="evidence" value="ECO:0000314"/>
    <property type="project" value="MGI"/>
</dbReference>
<dbReference type="GO" id="GO:0005813">
    <property type="term" value="C:centrosome"/>
    <property type="evidence" value="ECO:0000314"/>
    <property type="project" value="MGI"/>
</dbReference>
<dbReference type="GO" id="GO:0036064">
    <property type="term" value="C:ciliary basal body"/>
    <property type="evidence" value="ECO:0000314"/>
    <property type="project" value="MGI"/>
</dbReference>
<dbReference type="GO" id="GO:0005737">
    <property type="term" value="C:cytoplasm"/>
    <property type="evidence" value="ECO:0000314"/>
    <property type="project" value="MGI"/>
</dbReference>
<dbReference type="GO" id="GO:0005829">
    <property type="term" value="C:cytosol"/>
    <property type="evidence" value="ECO:0007669"/>
    <property type="project" value="Ensembl"/>
</dbReference>
<dbReference type="GO" id="GO:0005654">
    <property type="term" value="C:nucleoplasm"/>
    <property type="evidence" value="ECO:0007669"/>
    <property type="project" value="Ensembl"/>
</dbReference>
<dbReference type="GO" id="GO:0097733">
    <property type="term" value="C:photoreceptor cell cilium"/>
    <property type="evidence" value="ECO:0000314"/>
    <property type="project" value="MGI"/>
</dbReference>
<dbReference type="GO" id="GO:0030030">
    <property type="term" value="P:cell projection organization"/>
    <property type="evidence" value="ECO:0007669"/>
    <property type="project" value="UniProtKB-KW"/>
</dbReference>
<dbReference type="GO" id="GO:0007098">
    <property type="term" value="P:centrosome cycle"/>
    <property type="evidence" value="ECO:0007669"/>
    <property type="project" value="InterPro"/>
</dbReference>
<dbReference type="GO" id="GO:0030010">
    <property type="term" value="P:establishment of cell polarity"/>
    <property type="evidence" value="ECO:0000315"/>
    <property type="project" value="UniProtKB"/>
</dbReference>
<dbReference type="GO" id="GO:0031023">
    <property type="term" value="P:microtubule organizing center organization"/>
    <property type="evidence" value="ECO:0000315"/>
    <property type="project" value="MGI"/>
</dbReference>
<dbReference type="GO" id="GO:0001764">
    <property type="term" value="P:neuron migration"/>
    <property type="evidence" value="ECO:0000315"/>
    <property type="project" value="MGI"/>
</dbReference>
<dbReference type="GO" id="GO:1902017">
    <property type="term" value="P:regulation of cilium assembly"/>
    <property type="evidence" value="ECO:0000315"/>
    <property type="project" value="UniProtKB"/>
</dbReference>
<dbReference type="GO" id="GO:0035148">
    <property type="term" value="P:tube formation"/>
    <property type="evidence" value="ECO:0000315"/>
    <property type="project" value="UniProtKB"/>
</dbReference>
<dbReference type="InterPro" id="IPR031887">
    <property type="entry name" value="SDCCAG8"/>
</dbReference>
<dbReference type="PANTHER" id="PTHR34343">
    <property type="entry name" value="SEROLOGICALLY DEFINED COLON CANCER ANTIGEN 8"/>
    <property type="match status" value="1"/>
</dbReference>
<dbReference type="PANTHER" id="PTHR34343:SF1">
    <property type="entry name" value="SEROLOGICALLY DEFINED COLON CANCER ANTIGEN 8"/>
    <property type="match status" value="1"/>
</dbReference>
<dbReference type="Pfam" id="PF15964">
    <property type="entry name" value="CCCAP"/>
    <property type="match status" value="1"/>
</dbReference>
<gene>
    <name type="primary">Sdccag8</name>
    <name type="synonym">Cccap</name>
</gene>
<reference key="1">
    <citation type="journal article" date="2003" name="Gene">
        <title>Identification and characterization of the novel centrosome-associated protein CCCAP.</title>
        <authorList>
            <person name="Kenedy A.A."/>
            <person name="Cohen K.J."/>
            <person name="Loveys D.A."/>
            <person name="Kato G.J."/>
            <person name="Dang C.V."/>
        </authorList>
    </citation>
    <scope>NUCLEOTIDE SEQUENCE [MRNA]</scope>
    <scope>SUBUNIT</scope>
    <scope>SUBCELLULAR LOCATION</scope>
    <scope>TISSUE SPECIFICITY</scope>
    <source>
        <strain>C57BL/6J</strain>
        <tissue>Spleen</tissue>
    </source>
</reference>
<reference key="2">
    <citation type="journal article" date="2005" name="Science">
        <title>The transcriptional landscape of the mammalian genome.</title>
        <authorList>
            <person name="Carninci P."/>
            <person name="Kasukawa T."/>
            <person name="Katayama S."/>
            <person name="Gough J."/>
            <person name="Frith M.C."/>
            <person name="Maeda N."/>
            <person name="Oyama R."/>
            <person name="Ravasi T."/>
            <person name="Lenhard B."/>
            <person name="Wells C."/>
            <person name="Kodzius R."/>
            <person name="Shimokawa K."/>
            <person name="Bajic V.B."/>
            <person name="Brenner S.E."/>
            <person name="Batalov S."/>
            <person name="Forrest A.R."/>
            <person name="Zavolan M."/>
            <person name="Davis M.J."/>
            <person name="Wilming L.G."/>
            <person name="Aidinis V."/>
            <person name="Allen J.E."/>
            <person name="Ambesi-Impiombato A."/>
            <person name="Apweiler R."/>
            <person name="Aturaliya R.N."/>
            <person name="Bailey T.L."/>
            <person name="Bansal M."/>
            <person name="Baxter L."/>
            <person name="Beisel K.W."/>
            <person name="Bersano T."/>
            <person name="Bono H."/>
            <person name="Chalk A.M."/>
            <person name="Chiu K.P."/>
            <person name="Choudhary V."/>
            <person name="Christoffels A."/>
            <person name="Clutterbuck D.R."/>
            <person name="Crowe M.L."/>
            <person name="Dalla E."/>
            <person name="Dalrymple B.P."/>
            <person name="de Bono B."/>
            <person name="Della Gatta G."/>
            <person name="di Bernardo D."/>
            <person name="Down T."/>
            <person name="Engstrom P."/>
            <person name="Fagiolini M."/>
            <person name="Faulkner G."/>
            <person name="Fletcher C.F."/>
            <person name="Fukushima T."/>
            <person name="Furuno M."/>
            <person name="Futaki S."/>
            <person name="Gariboldi M."/>
            <person name="Georgii-Hemming P."/>
            <person name="Gingeras T.R."/>
            <person name="Gojobori T."/>
            <person name="Green R.E."/>
            <person name="Gustincich S."/>
            <person name="Harbers M."/>
            <person name="Hayashi Y."/>
            <person name="Hensch T.K."/>
            <person name="Hirokawa N."/>
            <person name="Hill D."/>
            <person name="Huminiecki L."/>
            <person name="Iacono M."/>
            <person name="Ikeo K."/>
            <person name="Iwama A."/>
            <person name="Ishikawa T."/>
            <person name="Jakt M."/>
            <person name="Kanapin A."/>
            <person name="Katoh M."/>
            <person name="Kawasawa Y."/>
            <person name="Kelso J."/>
            <person name="Kitamura H."/>
            <person name="Kitano H."/>
            <person name="Kollias G."/>
            <person name="Krishnan S.P."/>
            <person name="Kruger A."/>
            <person name="Kummerfeld S.K."/>
            <person name="Kurochkin I.V."/>
            <person name="Lareau L.F."/>
            <person name="Lazarevic D."/>
            <person name="Lipovich L."/>
            <person name="Liu J."/>
            <person name="Liuni S."/>
            <person name="McWilliam S."/>
            <person name="Madan Babu M."/>
            <person name="Madera M."/>
            <person name="Marchionni L."/>
            <person name="Matsuda H."/>
            <person name="Matsuzawa S."/>
            <person name="Miki H."/>
            <person name="Mignone F."/>
            <person name="Miyake S."/>
            <person name="Morris K."/>
            <person name="Mottagui-Tabar S."/>
            <person name="Mulder N."/>
            <person name="Nakano N."/>
            <person name="Nakauchi H."/>
            <person name="Ng P."/>
            <person name="Nilsson R."/>
            <person name="Nishiguchi S."/>
            <person name="Nishikawa S."/>
            <person name="Nori F."/>
            <person name="Ohara O."/>
            <person name="Okazaki Y."/>
            <person name="Orlando V."/>
            <person name="Pang K.C."/>
            <person name="Pavan W.J."/>
            <person name="Pavesi G."/>
            <person name="Pesole G."/>
            <person name="Petrovsky N."/>
            <person name="Piazza S."/>
            <person name="Reed J."/>
            <person name="Reid J.F."/>
            <person name="Ring B.Z."/>
            <person name="Ringwald M."/>
            <person name="Rost B."/>
            <person name="Ruan Y."/>
            <person name="Salzberg S.L."/>
            <person name="Sandelin A."/>
            <person name="Schneider C."/>
            <person name="Schoenbach C."/>
            <person name="Sekiguchi K."/>
            <person name="Semple C.A."/>
            <person name="Seno S."/>
            <person name="Sessa L."/>
            <person name="Sheng Y."/>
            <person name="Shibata Y."/>
            <person name="Shimada H."/>
            <person name="Shimada K."/>
            <person name="Silva D."/>
            <person name="Sinclair B."/>
            <person name="Sperling S."/>
            <person name="Stupka E."/>
            <person name="Sugiura K."/>
            <person name="Sultana R."/>
            <person name="Takenaka Y."/>
            <person name="Taki K."/>
            <person name="Tammoja K."/>
            <person name="Tan S.L."/>
            <person name="Tang S."/>
            <person name="Taylor M.S."/>
            <person name="Tegner J."/>
            <person name="Teichmann S.A."/>
            <person name="Ueda H.R."/>
            <person name="van Nimwegen E."/>
            <person name="Verardo R."/>
            <person name="Wei C.L."/>
            <person name="Yagi K."/>
            <person name="Yamanishi H."/>
            <person name="Zabarovsky E."/>
            <person name="Zhu S."/>
            <person name="Zimmer A."/>
            <person name="Hide W."/>
            <person name="Bult C."/>
            <person name="Grimmond S.M."/>
            <person name="Teasdale R.D."/>
            <person name="Liu E.T."/>
            <person name="Brusic V."/>
            <person name="Quackenbush J."/>
            <person name="Wahlestedt C."/>
            <person name="Mattick J.S."/>
            <person name="Hume D.A."/>
            <person name="Kai C."/>
            <person name="Sasaki D."/>
            <person name="Tomaru Y."/>
            <person name="Fukuda S."/>
            <person name="Kanamori-Katayama M."/>
            <person name="Suzuki M."/>
            <person name="Aoki J."/>
            <person name="Arakawa T."/>
            <person name="Iida J."/>
            <person name="Imamura K."/>
            <person name="Itoh M."/>
            <person name="Kato T."/>
            <person name="Kawaji H."/>
            <person name="Kawagashira N."/>
            <person name="Kawashima T."/>
            <person name="Kojima M."/>
            <person name="Kondo S."/>
            <person name="Konno H."/>
            <person name="Nakano K."/>
            <person name="Ninomiya N."/>
            <person name="Nishio T."/>
            <person name="Okada M."/>
            <person name="Plessy C."/>
            <person name="Shibata K."/>
            <person name="Shiraki T."/>
            <person name="Suzuki S."/>
            <person name="Tagami M."/>
            <person name="Waki K."/>
            <person name="Watahiki A."/>
            <person name="Okamura-Oho Y."/>
            <person name="Suzuki H."/>
            <person name="Kawai J."/>
            <person name="Hayashizaki Y."/>
        </authorList>
    </citation>
    <scope>NUCLEOTIDE SEQUENCE [LARGE SCALE MRNA]</scope>
    <source>
        <strain>C57BL/6J</strain>
        <tissue>Head</tissue>
        <tissue>Pituitary</tissue>
    </source>
</reference>
<reference key="3">
    <citation type="journal article" date="2010" name="Nat. Genet.">
        <title>Candidate exome capture identifies mutation of SDCCAG8 as the cause of a retinal-renal ciliopathy.</title>
        <authorList>
            <person name="Otto E.A."/>
            <person name="Hurd T.W."/>
            <person name="Airik R."/>
            <person name="Chaki M."/>
            <person name="Zhou W."/>
            <person name="Stoetzel C."/>
            <person name="Patil S.B."/>
            <person name="Levy S."/>
            <person name="Ghosh A.K."/>
            <person name="Murga-Zamalloa C.A."/>
            <person name="van Reeuwijk J."/>
            <person name="Letteboer S.J."/>
            <person name="Sang L."/>
            <person name="Giles R.H."/>
            <person name="Liu Q."/>
            <person name="Coene K.L."/>
            <person name="Estrada-Cuzcano A."/>
            <person name="Collin R.W."/>
            <person name="McLaughlin H.M."/>
            <person name="Held S."/>
            <person name="Kasanuki J.M."/>
            <person name="Ramaswami G."/>
            <person name="Conte J."/>
            <person name="Lopez I."/>
            <person name="Washburn J."/>
            <person name="Macdonald J."/>
            <person name="Hu J."/>
            <person name="Yamashita Y."/>
            <person name="Maher E.R."/>
            <person name="Guay-Woodford L.M."/>
            <person name="Neumann H.P."/>
            <person name="Obermuller N."/>
            <person name="Koenekoop R.K."/>
            <person name="Bergmann C."/>
            <person name="Bei X."/>
            <person name="Lewis R.A."/>
            <person name="Katsanis N."/>
            <person name="Lopes V."/>
            <person name="Williams D.S."/>
            <person name="Lyons R.H."/>
            <person name="Dang C.V."/>
            <person name="Brito D.A."/>
            <person name="Dias M.B."/>
            <person name="Zhang X."/>
            <person name="Cavalcoli J.D."/>
            <person name="Nurnberg G."/>
            <person name="Nurnberg P."/>
            <person name="Pierce E.A."/>
            <person name="Jackson P.K."/>
            <person name="Antignac C."/>
            <person name="Saunier S."/>
            <person name="Roepman R."/>
            <person name="Dollfus H."/>
            <person name="Khanna H."/>
            <person name="Hildebrandt F."/>
        </authorList>
    </citation>
    <scope>FUNCTION</scope>
    <scope>TISSUE SPECIFICITY</scope>
    <scope>SUBCELLULAR LOCATION</scope>
    <scope>DISRUPTION PHENOTYPE</scope>
</reference>
<reference key="4">
    <citation type="journal article" date="2016" name="PLoS ONE">
        <title>SDCCAG8 interacts with RAB effector proteins RABEP2 and ERC1 and is required for Hedgehog Signaling.</title>
        <authorList>
            <person name="Airik R."/>
            <person name="Schueler M."/>
            <person name="Airik M."/>
            <person name="Cho J."/>
            <person name="Ulanowicz K.A."/>
            <person name="Porath J.D."/>
            <person name="Hurd T.W."/>
            <person name="Bekker-Jensen S."/>
            <person name="Schroeder J.M."/>
            <person name="Andersen J.S."/>
            <person name="Hildebrandt F."/>
        </authorList>
    </citation>
    <scope>FUNCTION</scope>
    <scope>DISRUPTION PHENOTYPE</scope>
</reference>
<feature type="chain" id="PRO_0000076311" description="Serologically defined colon cancer antigen 8 homolog">
    <location>
        <begin position="1"/>
        <end position="717"/>
    </location>
</feature>
<feature type="region of interest" description="Disordered" evidence="3">
    <location>
        <begin position="84"/>
        <end position="115"/>
    </location>
</feature>
<feature type="region of interest" description="Sufficient for homodimerization">
    <location>
        <begin position="216"/>
        <end position="717"/>
    </location>
</feature>
<feature type="coiled-coil region" evidence="2">
    <location>
        <begin position="129"/>
        <end position="168"/>
    </location>
</feature>
<feature type="coiled-coil region" evidence="2">
    <location>
        <begin position="221"/>
        <end position="278"/>
    </location>
</feature>
<feature type="coiled-coil region" evidence="2">
    <location>
        <begin position="352"/>
        <end position="590"/>
    </location>
</feature>
<feature type="coiled-coil region" evidence="2">
    <location>
        <begin position="622"/>
        <end position="712"/>
    </location>
</feature>
<feature type="modified residue" description="Phosphoserine" evidence="1">
    <location>
        <position position="4"/>
    </location>
</feature>
<feature type="modified residue" description="Phosphoserine" evidence="1">
    <location>
        <position position="28"/>
    </location>
</feature>
<evidence type="ECO:0000250" key="1">
    <source>
        <dbReference type="UniProtKB" id="Q86SQ7"/>
    </source>
</evidence>
<evidence type="ECO:0000255" key="2"/>
<evidence type="ECO:0000256" key="3">
    <source>
        <dbReference type="SAM" id="MobiDB-lite"/>
    </source>
</evidence>
<evidence type="ECO:0000269" key="4">
    <source>
    </source>
</evidence>
<evidence type="ECO:0000269" key="5">
    <source>
    </source>
</evidence>
<evidence type="ECO:0000269" key="6">
    <source>
    </source>
</evidence>
<proteinExistence type="evidence at protein level"/>